<feature type="chain" id="PRO_0000221479" description="Crambin" evidence="1">
    <location>
        <begin position="1"/>
        <end position="46"/>
    </location>
</feature>
<feature type="disulfide bond" evidence="2">
    <location>
        <begin position="3"/>
        <end position="40"/>
    </location>
</feature>
<feature type="disulfide bond" evidence="2">
    <location>
        <begin position="4"/>
        <end position="32"/>
    </location>
</feature>
<feature type="disulfide bond" evidence="2">
    <location>
        <begin position="16"/>
        <end position="26"/>
    </location>
</feature>
<feature type="sequence variant" description="In isoform SI.">
    <original>P</original>
    <variation>S</variation>
    <location>
        <position position="22"/>
    </location>
</feature>
<feature type="sequence variant" description="In isoform SI.">
    <original>L</original>
    <variation>I</variation>
    <location>
        <position position="25"/>
    </location>
</feature>
<feature type="strand" evidence="7">
    <location>
        <begin position="2"/>
        <end position="6"/>
    </location>
</feature>
<feature type="helix" evidence="7">
    <location>
        <begin position="7"/>
        <end position="17"/>
    </location>
</feature>
<feature type="turn" evidence="7">
    <location>
        <begin position="18"/>
        <end position="20"/>
    </location>
</feature>
<feature type="helix" evidence="7">
    <location>
        <begin position="23"/>
        <end position="30"/>
    </location>
</feature>
<feature type="strand" evidence="7">
    <location>
        <begin position="36"/>
        <end position="38"/>
    </location>
</feature>
<feature type="helix" evidence="8">
    <location>
        <begin position="42"/>
        <end position="44"/>
    </location>
</feature>
<dbReference type="PIR" id="A01805">
    <property type="entry name" value="KECX"/>
</dbReference>
<dbReference type="PDB" id="1AB1">
    <property type="method" value="X-ray"/>
    <property type="resolution" value="0.89 A"/>
    <property type="chains" value="A=1-46"/>
</dbReference>
<dbReference type="PDB" id="1CBN">
    <property type="method" value="X-ray"/>
    <property type="resolution" value="0.83 A"/>
    <property type="chains" value="A=1-46"/>
</dbReference>
<dbReference type="PDB" id="1CCM">
    <property type="method" value="NMR"/>
    <property type="chains" value="A=1-46"/>
</dbReference>
<dbReference type="PDB" id="1CCN">
    <property type="method" value="NMR"/>
    <property type="chains" value="A=1-46"/>
</dbReference>
<dbReference type="PDB" id="1CNR">
    <property type="method" value="X-ray"/>
    <property type="resolution" value="1.05 A"/>
    <property type="chains" value="A=1-46"/>
</dbReference>
<dbReference type="PDB" id="1CRN">
    <property type="method" value="X-ray"/>
    <property type="resolution" value="1.50 A"/>
    <property type="chains" value="A=1-46"/>
</dbReference>
<dbReference type="PDB" id="1CXR">
    <property type="method" value="NMR"/>
    <property type="chains" value="A=1-46"/>
</dbReference>
<dbReference type="PDB" id="1EJG">
    <property type="method" value="X-ray"/>
    <property type="resolution" value="0.54 A"/>
    <property type="chains" value="A=1-46"/>
</dbReference>
<dbReference type="PDB" id="1JXT">
    <property type="method" value="X-ray"/>
    <property type="resolution" value="0.89 A"/>
    <property type="chains" value="A=1-46"/>
</dbReference>
<dbReference type="PDB" id="1JXU">
    <property type="method" value="X-ray"/>
    <property type="resolution" value="0.99 A"/>
    <property type="chains" value="A=1-46"/>
</dbReference>
<dbReference type="PDB" id="1JXW">
    <property type="method" value="X-ray"/>
    <property type="resolution" value="0.89 A"/>
    <property type="chains" value="A=1-46"/>
</dbReference>
<dbReference type="PDB" id="1JXX">
    <property type="method" value="X-ray"/>
    <property type="resolution" value="0.89 A"/>
    <property type="chains" value="A=1-46"/>
</dbReference>
<dbReference type="PDB" id="1JXY">
    <property type="method" value="X-ray"/>
    <property type="resolution" value="0.89 A"/>
    <property type="chains" value="A=1-46"/>
</dbReference>
<dbReference type="PDB" id="1YV8">
    <property type="method" value="NMR"/>
    <property type="chains" value="A=1-46"/>
</dbReference>
<dbReference type="PDB" id="1YVA">
    <property type="method" value="NMR"/>
    <property type="chains" value="A=1-46"/>
</dbReference>
<dbReference type="PDB" id="2EYA">
    <property type="method" value="NMR"/>
    <property type="chains" value="A=1-46"/>
</dbReference>
<dbReference type="PDB" id="2EYB">
    <property type="method" value="NMR"/>
    <property type="chains" value="A=1-46"/>
</dbReference>
<dbReference type="PDB" id="2EYC">
    <property type="method" value="NMR"/>
    <property type="chains" value="A=1-46"/>
</dbReference>
<dbReference type="PDB" id="2EYD">
    <property type="method" value="NMR"/>
    <property type="chains" value="A=1-46"/>
</dbReference>
<dbReference type="PDB" id="2FD7">
    <property type="method" value="X-ray"/>
    <property type="resolution" value="1.75 A"/>
    <property type="chains" value="A=1-46"/>
</dbReference>
<dbReference type="PDB" id="2FD9">
    <property type="method" value="X-ray"/>
    <property type="resolution" value="1.60 A"/>
    <property type="chains" value="A=1-46"/>
</dbReference>
<dbReference type="PDB" id="3NIR">
    <property type="method" value="X-ray"/>
    <property type="resolution" value="0.48 A"/>
    <property type="chains" value="A=1-46"/>
</dbReference>
<dbReference type="PDB" id="3U7T">
    <property type="method" value="X-ray"/>
    <property type="resolution" value="0.85 A"/>
    <property type="chains" value="A=1-46"/>
</dbReference>
<dbReference type="PDB" id="3UE7">
    <property type="method" value="X-ray"/>
    <property type="resolution" value="1.08 A"/>
    <property type="chains" value="B=1-46"/>
</dbReference>
<dbReference type="PDB" id="4FC1">
    <property type="method" value="Neutron"/>
    <property type="resolution" value="1.10 A"/>
    <property type="chains" value="A=1-46"/>
</dbReference>
<dbReference type="PDB" id="9EWK">
    <property type="method" value="X-ray"/>
    <property type="resolution" value="0.70 A"/>
    <property type="chains" value="A=1-46"/>
</dbReference>
<dbReference type="PDBsum" id="1AB1"/>
<dbReference type="PDBsum" id="1CBN"/>
<dbReference type="PDBsum" id="1CCM"/>
<dbReference type="PDBsum" id="1CCN"/>
<dbReference type="PDBsum" id="1CNR"/>
<dbReference type="PDBsum" id="1CRN"/>
<dbReference type="PDBsum" id="1CXR"/>
<dbReference type="PDBsum" id="1EJG"/>
<dbReference type="PDBsum" id="1JXT"/>
<dbReference type="PDBsum" id="1JXU"/>
<dbReference type="PDBsum" id="1JXW"/>
<dbReference type="PDBsum" id="1JXX"/>
<dbReference type="PDBsum" id="1JXY"/>
<dbReference type="PDBsum" id="1YV8"/>
<dbReference type="PDBsum" id="1YVA"/>
<dbReference type="PDBsum" id="2EYA"/>
<dbReference type="PDBsum" id="2EYB"/>
<dbReference type="PDBsum" id="2EYC"/>
<dbReference type="PDBsum" id="2EYD"/>
<dbReference type="PDBsum" id="2FD7"/>
<dbReference type="PDBsum" id="2FD9"/>
<dbReference type="PDBsum" id="3NIR"/>
<dbReference type="PDBsum" id="3U7T"/>
<dbReference type="PDBsum" id="3UE7"/>
<dbReference type="PDBsum" id="4FC1"/>
<dbReference type="PDBsum" id="9EWK"/>
<dbReference type="BMRB" id="P01542"/>
<dbReference type="SMR" id="P01542"/>
<dbReference type="EvolutionaryTrace" id="P01542"/>
<dbReference type="GO" id="GO:0005576">
    <property type="term" value="C:extracellular region"/>
    <property type="evidence" value="ECO:0007669"/>
    <property type="project" value="UniProtKB-SubCell"/>
</dbReference>
<dbReference type="GO" id="GO:0006952">
    <property type="term" value="P:defense response"/>
    <property type="evidence" value="ECO:0007669"/>
    <property type="project" value="UniProtKB-KW"/>
</dbReference>
<dbReference type="Gene3D" id="3.30.1350.10">
    <property type="entry name" value="Thionin-like"/>
    <property type="match status" value="1"/>
</dbReference>
<dbReference type="InterPro" id="IPR001010">
    <property type="entry name" value="Thionin"/>
</dbReference>
<dbReference type="InterPro" id="IPR036391">
    <property type="entry name" value="Thionin-like_sf"/>
</dbReference>
<dbReference type="Pfam" id="PF00321">
    <property type="entry name" value="Thionin"/>
    <property type="match status" value="1"/>
</dbReference>
<dbReference type="PRINTS" id="PR00287">
    <property type="entry name" value="THIONIN"/>
</dbReference>
<dbReference type="SUPFAM" id="SSF57429">
    <property type="entry name" value="Crambin-like"/>
    <property type="match status" value="1"/>
</dbReference>
<dbReference type="PROSITE" id="PS00271">
    <property type="entry name" value="THIONIN"/>
    <property type="match status" value="1"/>
</dbReference>
<accession>P01542</accession>
<sequence length="46" mass="4736">TTCCPSIVARSNFNVCRLPGTPEALCATYTGCIIIPGATCPGDYAN</sequence>
<gene>
    <name type="primary">THI2</name>
</gene>
<comment type="function">
    <text>The function of this hydrophobic plant seed protein is not known.</text>
</comment>
<comment type="subcellular location">
    <subcellularLocation>
        <location evidence="1">Secreted</location>
    </subcellularLocation>
</comment>
<comment type="miscellaneous">
    <text>Two isoforms exists, a major form PL (shown here) and a minor form SI.</text>
</comment>
<comment type="similarity">
    <text evidence="6">Belongs to the plant thionin (TC 1.C.44) family.</text>
</comment>
<organism>
    <name type="scientific">Crambe hispanica subsp. abyssinica</name>
    <name type="common">Abyssinian kale</name>
    <name type="synonym">Crambe abyssinica</name>
    <dbReference type="NCBI Taxonomy" id="3721"/>
    <lineage>
        <taxon>Eukaryota</taxon>
        <taxon>Viridiplantae</taxon>
        <taxon>Streptophyta</taxon>
        <taxon>Embryophyta</taxon>
        <taxon>Tracheophyta</taxon>
        <taxon>Spermatophyta</taxon>
        <taxon>Magnoliopsida</taxon>
        <taxon>eudicotyledons</taxon>
        <taxon>Gunneridae</taxon>
        <taxon>Pentapetalae</taxon>
        <taxon>rosids</taxon>
        <taxon>malvids</taxon>
        <taxon>Brassicales</taxon>
        <taxon>Brassicaceae</taxon>
        <taxon>Brassiceae</taxon>
        <taxon>Crambe</taxon>
    </lineage>
</organism>
<evidence type="ECO:0000269" key="1">
    <source>
    </source>
</evidence>
<evidence type="ECO:0000269" key="2">
    <source ref="2"/>
</evidence>
<evidence type="ECO:0000303" key="3">
    <source>
    </source>
</evidence>
<evidence type="ECO:0000303" key="4">
    <source>
    </source>
</evidence>
<evidence type="ECO:0000303" key="5">
    <source ref="2"/>
</evidence>
<evidence type="ECO:0000305" key="6"/>
<evidence type="ECO:0007829" key="7">
    <source>
        <dbReference type="PDB" id="1AB1"/>
    </source>
</evidence>
<evidence type="ECO:0007829" key="8">
    <source>
        <dbReference type="PDB" id="1CNR"/>
    </source>
</evidence>
<name>CRAM_CRAAB</name>
<reference key="1">
    <citation type="journal article" date="1981" name="Biochemistry">
        <title>Primary structure of the hydrophobic plant protein crambin.</title>
        <authorList>
            <person name="Teeter M.M."/>
            <person name="Mazer J.A."/>
            <person name="L'Italien J.J."/>
        </authorList>
    </citation>
    <scope>PROTEIN SEQUENCE</scope>
    <scope>SUBCELLULAR LOCATION</scope>
</reference>
<reference key="2">
    <citation type="journal article" date="1981" name="Nature">
        <title>Structure of the hydrophobic protein crambin determined directly from the anomalous scattering of sulphur.</title>
        <authorList>
            <person name="Hendrickson W.A."/>
            <person name="Teeter M.M."/>
        </authorList>
    </citation>
    <scope>X-RAY CRYSTALLOGRAPHY (1.5 ANGSTROMS)</scope>
    <scope>DISULFIDE BONDS</scope>
</reference>
<reference key="3">
    <citation type="journal article" date="1994" name="J. Biol. Chem.">
        <title>Correlated disorder of the pure Pro22/Leu25 form of crambin at 150 K refined to 1.05-A resolution.</title>
        <authorList>
            <person name="Yamano A."/>
            <person name="Teeter M.M."/>
        </authorList>
    </citation>
    <scope>X-RAY CRYSTALLOGRAPHY (1.05 ANGSTROMS)</scope>
</reference>
<reference key="4">
    <citation type="journal article" date="1997" name="J. Biol. Chem.">
        <title>Crystal structure of Ser-22/Ile-25 form crambin confirms solvent, side chain substate correlations.</title>
        <authorList>
            <person name="Yamano A."/>
            <person name="Heo N.-H."/>
            <person name="Teeter M.M."/>
        </authorList>
    </citation>
    <scope>X-RAY CRYSTALLOGRAPHY (0.89 ANGSTROMS)</scope>
</reference>
<reference key="5">
    <citation type="journal article" date="1988" name="Eur. J. Biochem.">
        <title>Secondary structure and hydrogen bonding of crambin in solution. A two-dimensional NMR study.</title>
        <authorList>
            <person name="Lamerichs R.M.J.N."/>
            <person name="Berliner L.J."/>
            <person name="Boelens R."/>
            <person name="de Marco A."/>
            <person name="Llinas M."/>
            <person name="Kaptein R."/>
        </authorList>
    </citation>
    <scope>STRUCTURE BY NMR</scope>
    <scope>DISULFIDE BONDS</scope>
</reference>
<keyword id="KW-0002">3D-structure</keyword>
<keyword id="KW-0903">Direct protein sequencing</keyword>
<keyword id="KW-1015">Disulfide bond</keyword>
<keyword id="KW-0611">Plant defense</keyword>
<keyword id="KW-0964">Secreted</keyword>
<protein>
    <recommendedName>
        <fullName evidence="3 4 5">Crambin</fullName>
    </recommendedName>
</protein>
<proteinExistence type="evidence at protein level"/>